<reference key="1">
    <citation type="journal article" date="2005" name="Nucleic Acids Res.">
        <title>Genome dynamics and diversity of Shigella species, the etiologic agents of bacillary dysentery.</title>
        <authorList>
            <person name="Yang F."/>
            <person name="Yang J."/>
            <person name="Zhang X."/>
            <person name="Chen L."/>
            <person name="Jiang Y."/>
            <person name="Yan Y."/>
            <person name="Tang X."/>
            <person name="Wang J."/>
            <person name="Xiong Z."/>
            <person name="Dong J."/>
            <person name="Xue Y."/>
            <person name="Zhu Y."/>
            <person name="Xu X."/>
            <person name="Sun L."/>
            <person name="Chen S."/>
            <person name="Nie H."/>
            <person name="Peng J."/>
            <person name="Xu J."/>
            <person name="Wang Y."/>
            <person name="Yuan Z."/>
            <person name="Wen Y."/>
            <person name="Yao Z."/>
            <person name="Shen Y."/>
            <person name="Qiang B."/>
            <person name="Hou Y."/>
            <person name="Yu J."/>
            <person name="Jin Q."/>
        </authorList>
    </citation>
    <scope>NUCLEOTIDE SEQUENCE [LARGE SCALE GENOMIC DNA]</scope>
    <source>
        <strain>Sb227</strain>
    </source>
</reference>
<protein>
    <recommendedName>
        <fullName evidence="1">2,3-diketo-L-gulonate reductase</fullName>
        <shortName evidence="1">2,3-DKG reductase</shortName>
        <ecNumber evidence="1">1.1.1.130</ecNumber>
    </recommendedName>
    <alternativeName>
        <fullName evidence="1">3-dehydro-L-gulonate 2-dehydrogenase</fullName>
    </alternativeName>
</protein>
<comment type="function">
    <text evidence="1">Catalyzes the reduction of 2,3-diketo-L-gulonate in the presence of NADH, to form 3-keto-L-gulonate.</text>
</comment>
<comment type="catalytic activity">
    <reaction evidence="1">
        <text>3-dehydro-L-gulonate + NAD(+) = 2,3-dioxo-L-gulonate + NADH + H(+)</text>
        <dbReference type="Rhea" id="RHEA:21924"/>
        <dbReference type="ChEBI" id="CHEBI:15378"/>
        <dbReference type="ChEBI" id="CHEBI:57441"/>
        <dbReference type="ChEBI" id="CHEBI:57540"/>
        <dbReference type="ChEBI" id="CHEBI:57655"/>
        <dbReference type="ChEBI" id="CHEBI:57945"/>
        <dbReference type="EC" id="1.1.1.130"/>
    </reaction>
</comment>
<comment type="catalytic activity">
    <reaction evidence="1">
        <text>3-dehydro-L-gulonate + NADP(+) = 2,3-dioxo-L-gulonate + NADPH + H(+)</text>
        <dbReference type="Rhea" id="RHEA:21928"/>
        <dbReference type="ChEBI" id="CHEBI:15378"/>
        <dbReference type="ChEBI" id="CHEBI:57441"/>
        <dbReference type="ChEBI" id="CHEBI:57655"/>
        <dbReference type="ChEBI" id="CHEBI:57783"/>
        <dbReference type="ChEBI" id="CHEBI:58349"/>
        <dbReference type="EC" id="1.1.1.130"/>
    </reaction>
</comment>
<comment type="subunit">
    <text evidence="1">Homodimer.</text>
</comment>
<comment type="subcellular location">
    <subcellularLocation>
        <location evidence="1">Cytoplasm</location>
    </subcellularLocation>
</comment>
<comment type="similarity">
    <text evidence="1">Belongs to the LDH2/MDH2 oxidoreductase family. DlgD subfamily.</text>
</comment>
<keyword id="KW-0963">Cytoplasm</keyword>
<keyword id="KW-0520">NAD</keyword>
<keyword id="KW-0560">Oxidoreductase</keyword>
<dbReference type="EC" id="1.1.1.130" evidence="1"/>
<dbReference type="EMBL" id="CP000036">
    <property type="protein sequence ID" value="ABB68065.1"/>
    <property type="molecule type" value="Genomic_DNA"/>
</dbReference>
<dbReference type="SMR" id="Q31V43"/>
<dbReference type="KEGG" id="sbo:SBO_3583"/>
<dbReference type="HOGENOM" id="CLU_040452_4_0_6"/>
<dbReference type="Proteomes" id="UP000007067">
    <property type="component" value="Chromosome"/>
</dbReference>
<dbReference type="GO" id="GO:0005737">
    <property type="term" value="C:cytoplasm"/>
    <property type="evidence" value="ECO:0007669"/>
    <property type="project" value="UniProtKB-SubCell"/>
</dbReference>
<dbReference type="GO" id="GO:0047559">
    <property type="term" value="F:3-dehydro-L-gulonate 2-dehydrogenase activity"/>
    <property type="evidence" value="ECO:0007669"/>
    <property type="project" value="UniProtKB-UniRule"/>
</dbReference>
<dbReference type="GO" id="GO:0070403">
    <property type="term" value="F:NAD+ binding"/>
    <property type="evidence" value="ECO:0007669"/>
    <property type="project" value="InterPro"/>
</dbReference>
<dbReference type="Gene3D" id="1.10.1530.10">
    <property type="match status" value="1"/>
</dbReference>
<dbReference type="Gene3D" id="3.30.1370.60">
    <property type="entry name" value="Hypothetical oxidoreductase yiak, domain 2"/>
    <property type="match status" value="1"/>
</dbReference>
<dbReference type="Gene3D" id="3.30.60.50">
    <property type="entry name" value="Hypothetical oxidoreductase yiak, domain 3"/>
    <property type="match status" value="1"/>
</dbReference>
<dbReference type="HAMAP" id="MF_00820">
    <property type="entry name" value="Diketo_gul_reduc"/>
    <property type="match status" value="1"/>
</dbReference>
<dbReference type="InterPro" id="IPR023689">
    <property type="entry name" value="Diketo_gul_Rdtase"/>
</dbReference>
<dbReference type="InterPro" id="IPR043144">
    <property type="entry name" value="Mal/L-sulf/L-lact_DH-like_ah"/>
</dbReference>
<dbReference type="InterPro" id="IPR043143">
    <property type="entry name" value="Mal/L-sulf/L-lact_DH-like_NADP"/>
</dbReference>
<dbReference type="InterPro" id="IPR036111">
    <property type="entry name" value="Mal/L-sulfo/L-lacto_DH-like_sf"/>
</dbReference>
<dbReference type="InterPro" id="IPR003767">
    <property type="entry name" value="Malate/L-lactate_DH-like"/>
</dbReference>
<dbReference type="NCBIfam" id="NF009750">
    <property type="entry name" value="PRK13260.1"/>
    <property type="match status" value="1"/>
</dbReference>
<dbReference type="PANTHER" id="PTHR11091:SF3">
    <property type="entry name" value="2,3-DIKETO-L-GULONATE REDUCTASE"/>
    <property type="match status" value="1"/>
</dbReference>
<dbReference type="PANTHER" id="PTHR11091">
    <property type="entry name" value="OXIDOREDUCTASE-RELATED"/>
    <property type="match status" value="1"/>
</dbReference>
<dbReference type="Pfam" id="PF02615">
    <property type="entry name" value="Ldh_2"/>
    <property type="match status" value="1"/>
</dbReference>
<dbReference type="SUPFAM" id="SSF89733">
    <property type="entry name" value="L-sulfolactate dehydrogenase-like"/>
    <property type="match status" value="1"/>
</dbReference>
<accession>Q31V43</accession>
<name>DLGD_SHIBS</name>
<evidence type="ECO:0000255" key="1">
    <source>
        <dbReference type="HAMAP-Rule" id="MF_00820"/>
    </source>
</evidence>
<sequence>MKVTFEQLKAAFNRALISRGVDSETADACAEMFARTTESGVYSHGVNRFPRFIQQLENGDIIPDAQPKRITSLGAIEQWDAQRSIGNLTAKKMMDRAIELAADHGIGLVALRNANHWMRGGSYGWQAAEKGYIGICWTNSIAVMPPWGAKECRIGTNPLIVAIPSTPITMVDMSMSMFSYGMLEVNRLAGRQLPVDGGFDDEGNLTKEPGVIEKNRRILPMGYWKGSGMSIVLDMIATLLSDGASVAEVTQDNSDEYGISQIFIAIEVDKLIDGPTRDAKLQRIMDYVTTAERADENQAIRLPGHEFTTLLAENRRNGITVDDSVWAKIQAL</sequence>
<proteinExistence type="inferred from homology"/>
<organism>
    <name type="scientific">Shigella boydii serotype 4 (strain Sb227)</name>
    <dbReference type="NCBI Taxonomy" id="300268"/>
    <lineage>
        <taxon>Bacteria</taxon>
        <taxon>Pseudomonadati</taxon>
        <taxon>Pseudomonadota</taxon>
        <taxon>Gammaproteobacteria</taxon>
        <taxon>Enterobacterales</taxon>
        <taxon>Enterobacteriaceae</taxon>
        <taxon>Shigella</taxon>
    </lineage>
</organism>
<gene>
    <name evidence="1" type="primary">dlgD</name>
    <name type="ordered locus">SBO_3583</name>
</gene>
<feature type="chain" id="PRO_1000062445" description="2,3-diketo-L-gulonate reductase">
    <location>
        <begin position="1"/>
        <end position="332"/>
    </location>
</feature>
<feature type="active site" description="Proton donor" evidence="1">
    <location>
        <position position="44"/>
    </location>
</feature>
<feature type="binding site" evidence="1">
    <location>
        <begin position="168"/>
        <end position="174"/>
    </location>
    <ligand>
        <name>NAD(+)</name>
        <dbReference type="ChEBI" id="CHEBI:57540"/>
    </ligand>
</feature>
<feature type="binding site" evidence="1">
    <location>
        <begin position="224"/>
        <end position="225"/>
    </location>
    <ligand>
        <name>NAD(+)</name>
        <dbReference type="ChEBI" id="CHEBI:57540"/>
    </ligand>
</feature>
<feature type="binding site" evidence="1">
    <location>
        <begin position="304"/>
        <end position="306"/>
    </location>
    <ligand>
        <name>NAD(+)</name>
        <dbReference type="ChEBI" id="CHEBI:57540"/>
    </ligand>
</feature>